<reference key="1">
    <citation type="submission" date="2006-12" db="EMBL/GenBank/DDBJ databases">
        <title>Complete sequence of chromosome 1 of Verminephrobacter eiseniae EF01-2.</title>
        <authorList>
            <person name="Copeland A."/>
            <person name="Lucas S."/>
            <person name="Lapidus A."/>
            <person name="Barry K."/>
            <person name="Detter J.C."/>
            <person name="Glavina del Rio T."/>
            <person name="Dalin E."/>
            <person name="Tice H."/>
            <person name="Pitluck S."/>
            <person name="Chertkov O."/>
            <person name="Brettin T."/>
            <person name="Bruce D."/>
            <person name="Han C."/>
            <person name="Tapia R."/>
            <person name="Gilna P."/>
            <person name="Schmutz J."/>
            <person name="Larimer F."/>
            <person name="Land M."/>
            <person name="Hauser L."/>
            <person name="Kyrpides N."/>
            <person name="Kim E."/>
            <person name="Stahl D."/>
            <person name="Richardson P."/>
        </authorList>
    </citation>
    <scope>NUCLEOTIDE SEQUENCE [LARGE SCALE GENOMIC DNA]</scope>
    <source>
        <strain>EF01-2</strain>
    </source>
</reference>
<accession>A1WGM5</accession>
<protein>
    <recommendedName>
        <fullName evidence="1">Thymidylate kinase</fullName>
        <ecNumber evidence="1">2.7.4.9</ecNumber>
    </recommendedName>
    <alternativeName>
        <fullName evidence="1">dTMP kinase</fullName>
    </alternativeName>
</protein>
<proteinExistence type="inferred from homology"/>
<organism>
    <name type="scientific">Verminephrobacter eiseniae (strain EF01-2)</name>
    <dbReference type="NCBI Taxonomy" id="391735"/>
    <lineage>
        <taxon>Bacteria</taxon>
        <taxon>Pseudomonadati</taxon>
        <taxon>Pseudomonadota</taxon>
        <taxon>Betaproteobacteria</taxon>
        <taxon>Burkholderiales</taxon>
        <taxon>Comamonadaceae</taxon>
        <taxon>Verminephrobacter</taxon>
    </lineage>
</organism>
<feature type="chain" id="PRO_1000023309" description="Thymidylate kinase">
    <location>
        <begin position="1"/>
        <end position="226"/>
    </location>
</feature>
<feature type="binding site" evidence="1">
    <location>
        <begin position="12"/>
        <end position="19"/>
    </location>
    <ligand>
        <name>ATP</name>
        <dbReference type="ChEBI" id="CHEBI:30616"/>
    </ligand>
</feature>
<keyword id="KW-0067">ATP-binding</keyword>
<keyword id="KW-0418">Kinase</keyword>
<keyword id="KW-0545">Nucleotide biosynthesis</keyword>
<keyword id="KW-0547">Nucleotide-binding</keyword>
<keyword id="KW-1185">Reference proteome</keyword>
<keyword id="KW-0808">Transferase</keyword>
<sequence length="226" mass="24839">MSRPGLFISFEGIDGAGKSSHVEGLAAAFRAQGRRVTVSREPGGTPLAEKLRALLLAERMDALTESLLIFAARRDHLRQVIEPALARGDVVLCDRFTDSTFAYQGAGRGFDHETLSILERMTNTAAAHKDGLLPEPELTLWFDLAPELAAERMAGAAHRPDRFEAQPVEFFRRVARGYADRAAAAPRRIVRIDAAQECHRVRQQLRDALVCKGWLAPMVTPQGGAQ</sequence>
<name>KTHY_VEREI</name>
<gene>
    <name evidence="1" type="primary">tmk</name>
    <name type="ordered locus">Veis_1005</name>
</gene>
<evidence type="ECO:0000255" key="1">
    <source>
        <dbReference type="HAMAP-Rule" id="MF_00165"/>
    </source>
</evidence>
<dbReference type="EC" id="2.7.4.9" evidence="1"/>
<dbReference type="EMBL" id="CP000542">
    <property type="protein sequence ID" value="ABM56782.1"/>
    <property type="molecule type" value="Genomic_DNA"/>
</dbReference>
<dbReference type="RefSeq" id="WP_011808794.1">
    <property type="nucleotide sequence ID" value="NC_008786.1"/>
</dbReference>
<dbReference type="SMR" id="A1WGM5"/>
<dbReference type="STRING" id="391735.Veis_1005"/>
<dbReference type="GeneID" id="76459682"/>
<dbReference type="KEGG" id="vei:Veis_1005"/>
<dbReference type="eggNOG" id="COG0125">
    <property type="taxonomic scope" value="Bacteria"/>
</dbReference>
<dbReference type="HOGENOM" id="CLU_049131_0_2_4"/>
<dbReference type="OrthoDB" id="9774907at2"/>
<dbReference type="Proteomes" id="UP000000374">
    <property type="component" value="Chromosome"/>
</dbReference>
<dbReference type="GO" id="GO:0005829">
    <property type="term" value="C:cytosol"/>
    <property type="evidence" value="ECO:0007669"/>
    <property type="project" value="TreeGrafter"/>
</dbReference>
<dbReference type="GO" id="GO:0005524">
    <property type="term" value="F:ATP binding"/>
    <property type="evidence" value="ECO:0007669"/>
    <property type="project" value="UniProtKB-UniRule"/>
</dbReference>
<dbReference type="GO" id="GO:0004798">
    <property type="term" value="F:dTMP kinase activity"/>
    <property type="evidence" value="ECO:0007669"/>
    <property type="project" value="UniProtKB-UniRule"/>
</dbReference>
<dbReference type="GO" id="GO:0006233">
    <property type="term" value="P:dTDP biosynthetic process"/>
    <property type="evidence" value="ECO:0007669"/>
    <property type="project" value="InterPro"/>
</dbReference>
<dbReference type="GO" id="GO:0006235">
    <property type="term" value="P:dTTP biosynthetic process"/>
    <property type="evidence" value="ECO:0007669"/>
    <property type="project" value="UniProtKB-UniRule"/>
</dbReference>
<dbReference type="GO" id="GO:0006227">
    <property type="term" value="P:dUDP biosynthetic process"/>
    <property type="evidence" value="ECO:0007669"/>
    <property type="project" value="TreeGrafter"/>
</dbReference>
<dbReference type="CDD" id="cd01672">
    <property type="entry name" value="TMPK"/>
    <property type="match status" value="1"/>
</dbReference>
<dbReference type="FunFam" id="3.40.50.300:FF:000225">
    <property type="entry name" value="Thymidylate kinase"/>
    <property type="match status" value="1"/>
</dbReference>
<dbReference type="Gene3D" id="3.40.50.300">
    <property type="entry name" value="P-loop containing nucleotide triphosphate hydrolases"/>
    <property type="match status" value="1"/>
</dbReference>
<dbReference type="HAMAP" id="MF_00165">
    <property type="entry name" value="Thymidylate_kinase"/>
    <property type="match status" value="1"/>
</dbReference>
<dbReference type="InterPro" id="IPR027417">
    <property type="entry name" value="P-loop_NTPase"/>
</dbReference>
<dbReference type="InterPro" id="IPR039430">
    <property type="entry name" value="Thymidylate_kin-like_dom"/>
</dbReference>
<dbReference type="InterPro" id="IPR018095">
    <property type="entry name" value="Thymidylate_kin_CS"/>
</dbReference>
<dbReference type="InterPro" id="IPR018094">
    <property type="entry name" value="Thymidylate_kinase"/>
</dbReference>
<dbReference type="NCBIfam" id="TIGR00041">
    <property type="entry name" value="DTMP_kinase"/>
    <property type="match status" value="1"/>
</dbReference>
<dbReference type="PANTHER" id="PTHR10344">
    <property type="entry name" value="THYMIDYLATE KINASE"/>
    <property type="match status" value="1"/>
</dbReference>
<dbReference type="PANTHER" id="PTHR10344:SF4">
    <property type="entry name" value="UMP-CMP KINASE 2, MITOCHONDRIAL"/>
    <property type="match status" value="1"/>
</dbReference>
<dbReference type="Pfam" id="PF02223">
    <property type="entry name" value="Thymidylate_kin"/>
    <property type="match status" value="1"/>
</dbReference>
<dbReference type="SUPFAM" id="SSF52540">
    <property type="entry name" value="P-loop containing nucleoside triphosphate hydrolases"/>
    <property type="match status" value="1"/>
</dbReference>
<dbReference type="PROSITE" id="PS01331">
    <property type="entry name" value="THYMIDYLATE_KINASE"/>
    <property type="match status" value="1"/>
</dbReference>
<comment type="function">
    <text evidence="1">Phosphorylation of dTMP to form dTDP in both de novo and salvage pathways of dTTP synthesis.</text>
</comment>
<comment type="catalytic activity">
    <reaction evidence="1">
        <text>dTMP + ATP = dTDP + ADP</text>
        <dbReference type="Rhea" id="RHEA:13517"/>
        <dbReference type="ChEBI" id="CHEBI:30616"/>
        <dbReference type="ChEBI" id="CHEBI:58369"/>
        <dbReference type="ChEBI" id="CHEBI:63528"/>
        <dbReference type="ChEBI" id="CHEBI:456216"/>
        <dbReference type="EC" id="2.7.4.9"/>
    </reaction>
</comment>
<comment type="similarity">
    <text evidence="1">Belongs to the thymidylate kinase family.</text>
</comment>